<accession>B4RL77</accession>
<dbReference type="EC" id="6.2.1.5" evidence="1"/>
<dbReference type="EMBL" id="CP001050">
    <property type="protein sequence ID" value="ACF29567.1"/>
    <property type="molecule type" value="Genomic_DNA"/>
</dbReference>
<dbReference type="RefSeq" id="WP_003688408.1">
    <property type="nucleotide sequence ID" value="NC_011035.1"/>
</dbReference>
<dbReference type="SMR" id="B4RL77"/>
<dbReference type="GeneID" id="66753243"/>
<dbReference type="KEGG" id="ngk:NGK_0887"/>
<dbReference type="HOGENOM" id="CLU_037430_0_2_4"/>
<dbReference type="UniPathway" id="UPA00223">
    <property type="reaction ID" value="UER00999"/>
</dbReference>
<dbReference type="Proteomes" id="UP000002564">
    <property type="component" value="Chromosome"/>
</dbReference>
<dbReference type="GO" id="GO:0005829">
    <property type="term" value="C:cytosol"/>
    <property type="evidence" value="ECO:0007669"/>
    <property type="project" value="TreeGrafter"/>
</dbReference>
<dbReference type="GO" id="GO:0042709">
    <property type="term" value="C:succinate-CoA ligase complex"/>
    <property type="evidence" value="ECO:0007669"/>
    <property type="project" value="TreeGrafter"/>
</dbReference>
<dbReference type="GO" id="GO:0005524">
    <property type="term" value="F:ATP binding"/>
    <property type="evidence" value="ECO:0007669"/>
    <property type="project" value="UniProtKB-UniRule"/>
</dbReference>
<dbReference type="GO" id="GO:0000287">
    <property type="term" value="F:magnesium ion binding"/>
    <property type="evidence" value="ECO:0007669"/>
    <property type="project" value="UniProtKB-UniRule"/>
</dbReference>
<dbReference type="GO" id="GO:0004775">
    <property type="term" value="F:succinate-CoA ligase (ADP-forming) activity"/>
    <property type="evidence" value="ECO:0007669"/>
    <property type="project" value="UniProtKB-UniRule"/>
</dbReference>
<dbReference type="GO" id="GO:0004776">
    <property type="term" value="F:succinate-CoA ligase (GDP-forming) activity"/>
    <property type="evidence" value="ECO:0007669"/>
    <property type="project" value="RHEA"/>
</dbReference>
<dbReference type="GO" id="GO:0006104">
    <property type="term" value="P:succinyl-CoA metabolic process"/>
    <property type="evidence" value="ECO:0007669"/>
    <property type="project" value="TreeGrafter"/>
</dbReference>
<dbReference type="GO" id="GO:0006099">
    <property type="term" value="P:tricarboxylic acid cycle"/>
    <property type="evidence" value="ECO:0007669"/>
    <property type="project" value="UniProtKB-UniRule"/>
</dbReference>
<dbReference type="FunFam" id="3.30.1490.20:FF:000002">
    <property type="entry name" value="Succinate--CoA ligase [ADP-forming] subunit beta"/>
    <property type="match status" value="1"/>
</dbReference>
<dbReference type="FunFam" id="3.30.470.20:FF:000002">
    <property type="entry name" value="Succinate--CoA ligase [ADP-forming] subunit beta"/>
    <property type="match status" value="1"/>
</dbReference>
<dbReference type="FunFam" id="3.40.50.261:FF:000001">
    <property type="entry name" value="Succinate--CoA ligase [ADP-forming] subunit beta"/>
    <property type="match status" value="1"/>
</dbReference>
<dbReference type="Gene3D" id="3.30.1490.20">
    <property type="entry name" value="ATP-grasp fold, A domain"/>
    <property type="match status" value="1"/>
</dbReference>
<dbReference type="Gene3D" id="3.30.470.20">
    <property type="entry name" value="ATP-grasp fold, B domain"/>
    <property type="match status" value="1"/>
</dbReference>
<dbReference type="Gene3D" id="3.40.50.261">
    <property type="entry name" value="Succinyl-CoA synthetase domains"/>
    <property type="match status" value="1"/>
</dbReference>
<dbReference type="HAMAP" id="MF_00558">
    <property type="entry name" value="Succ_CoA_beta"/>
    <property type="match status" value="1"/>
</dbReference>
<dbReference type="InterPro" id="IPR011761">
    <property type="entry name" value="ATP-grasp"/>
</dbReference>
<dbReference type="InterPro" id="IPR013650">
    <property type="entry name" value="ATP-grasp_succ-CoA_synth-type"/>
</dbReference>
<dbReference type="InterPro" id="IPR013815">
    <property type="entry name" value="ATP_grasp_subdomain_1"/>
</dbReference>
<dbReference type="InterPro" id="IPR017866">
    <property type="entry name" value="Succ-CoA_synthase_bsu_CS"/>
</dbReference>
<dbReference type="InterPro" id="IPR005811">
    <property type="entry name" value="SUCC_ACL_C"/>
</dbReference>
<dbReference type="InterPro" id="IPR005809">
    <property type="entry name" value="Succ_CoA_ligase-like_bsu"/>
</dbReference>
<dbReference type="InterPro" id="IPR016102">
    <property type="entry name" value="Succinyl-CoA_synth-like"/>
</dbReference>
<dbReference type="NCBIfam" id="NF001913">
    <property type="entry name" value="PRK00696.1"/>
    <property type="match status" value="1"/>
</dbReference>
<dbReference type="NCBIfam" id="TIGR01016">
    <property type="entry name" value="sucCoAbeta"/>
    <property type="match status" value="1"/>
</dbReference>
<dbReference type="PANTHER" id="PTHR11815:SF10">
    <property type="entry name" value="SUCCINATE--COA LIGASE [GDP-FORMING] SUBUNIT BETA, MITOCHONDRIAL"/>
    <property type="match status" value="1"/>
</dbReference>
<dbReference type="PANTHER" id="PTHR11815">
    <property type="entry name" value="SUCCINYL-COA SYNTHETASE BETA CHAIN"/>
    <property type="match status" value="1"/>
</dbReference>
<dbReference type="Pfam" id="PF08442">
    <property type="entry name" value="ATP-grasp_2"/>
    <property type="match status" value="1"/>
</dbReference>
<dbReference type="Pfam" id="PF00549">
    <property type="entry name" value="Ligase_CoA"/>
    <property type="match status" value="1"/>
</dbReference>
<dbReference type="PIRSF" id="PIRSF001554">
    <property type="entry name" value="SucCS_beta"/>
    <property type="match status" value="1"/>
</dbReference>
<dbReference type="SUPFAM" id="SSF56059">
    <property type="entry name" value="Glutathione synthetase ATP-binding domain-like"/>
    <property type="match status" value="1"/>
</dbReference>
<dbReference type="SUPFAM" id="SSF52210">
    <property type="entry name" value="Succinyl-CoA synthetase domains"/>
    <property type="match status" value="1"/>
</dbReference>
<dbReference type="PROSITE" id="PS50975">
    <property type="entry name" value="ATP_GRASP"/>
    <property type="match status" value="1"/>
</dbReference>
<dbReference type="PROSITE" id="PS01217">
    <property type="entry name" value="SUCCINYL_COA_LIG_3"/>
    <property type="match status" value="1"/>
</dbReference>
<keyword id="KW-0067">ATP-binding</keyword>
<keyword id="KW-0436">Ligase</keyword>
<keyword id="KW-0460">Magnesium</keyword>
<keyword id="KW-0479">Metal-binding</keyword>
<keyword id="KW-0547">Nucleotide-binding</keyword>
<keyword id="KW-0816">Tricarboxylic acid cycle</keyword>
<gene>
    <name evidence="1" type="primary">sucC</name>
    <name type="ordered locus">NGK_0887</name>
</gene>
<proteinExistence type="inferred from homology"/>
<sequence length="388" mass="41293">MNLHEYQAKELLASYGLPVQGGILAHNGEEAAAAYDKLGGKFAVVKAQVHAGGRGKAGGVKVVKSREKAKEVAESLIGTNLVTYQTDANGQPVNSVLVCEDMYPVQTELYLGAVVDRSTRRVTFMASTEGGVEIEKVAAETPEKIFKVTVDPLVGLQPCQAREVAFQLGLKDKQINEFAKLMTGAYKAFVENDFALFEVNPLAVRENGALACVDGKIGIDSNALYRLPKIAELRDKSQENERELKASEFDLNYVALEGNIGCMVNGAGLAMATMDIIKLKGGQPANFLDVGGGATKDRVVEAFKLILEDKSVKGVLINIFGGIVRCDMIAEAIVAAVKEINVNVPVVVRLEGNNAELGAKILNESGLKLTSADGLNDAAEKIVAAVNA</sequence>
<name>SUCC_NEIG2</name>
<protein>
    <recommendedName>
        <fullName evidence="1">Succinate--CoA ligase [ADP-forming] subunit beta</fullName>
        <ecNumber evidence="1">6.2.1.5</ecNumber>
    </recommendedName>
    <alternativeName>
        <fullName evidence="1">Succinyl-CoA synthetase subunit beta</fullName>
        <shortName evidence="1">SCS-beta</shortName>
    </alternativeName>
</protein>
<reference key="1">
    <citation type="journal article" date="2008" name="J. Bacteriol.">
        <title>Complete genome sequence of Neisseria gonorrhoeae NCCP11945.</title>
        <authorList>
            <person name="Chung G.T."/>
            <person name="Yoo J.S."/>
            <person name="Oh H.B."/>
            <person name="Lee Y.S."/>
            <person name="Cha S.H."/>
            <person name="Kim S.J."/>
            <person name="Yoo C.K."/>
        </authorList>
    </citation>
    <scope>NUCLEOTIDE SEQUENCE [LARGE SCALE GENOMIC DNA]</scope>
    <source>
        <strain>NCCP11945</strain>
    </source>
</reference>
<evidence type="ECO:0000255" key="1">
    <source>
        <dbReference type="HAMAP-Rule" id="MF_00558"/>
    </source>
</evidence>
<comment type="function">
    <text evidence="1">Succinyl-CoA synthetase functions in the citric acid cycle (TCA), coupling the hydrolysis of succinyl-CoA to the synthesis of either ATP or GTP and thus represents the only step of substrate-level phosphorylation in the TCA. The beta subunit provides nucleotide specificity of the enzyme and binds the substrate succinate, while the binding sites for coenzyme A and phosphate are found in the alpha subunit.</text>
</comment>
<comment type="catalytic activity">
    <reaction evidence="1">
        <text>succinate + ATP + CoA = succinyl-CoA + ADP + phosphate</text>
        <dbReference type="Rhea" id="RHEA:17661"/>
        <dbReference type="ChEBI" id="CHEBI:30031"/>
        <dbReference type="ChEBI" id="CHEBI:30616"/>
        <dbReference type="ChEBI" id="CHEBI:43474"/>
        <dbReference type="ChEBI" id="CHEBI:57287"/>
        <dbReference type="ChEBI" id="CHEBI:57292"/>
        <dbReference type="ChEBI" id="CHEBI:456216"/>
        <dbReference type="EC" id="6.2.1.5"/>
    </reaction>
    <physiologicalReaction direction="right-to-left" evidence="1">
        <dbReference type="Rhea" id="RHEA:17663"/>
    </physiologicalReaction>
</comment>
<comment type="catalytic activity">
    <reaction evidence="1">
        <text>GTP + succinate + CoA = succinyl-CoA + GDP + phosphate</text>
        <dbReference type="Rhea" id="RHEA:22120"/>
        <dbReference type="ChEBI" id="CHEBI:30031"/>
        <dbReference type="ChEBI" id="CHEBI:37565"/>
        <dbReference type="ChEBI" id="CHEBI:43474"/>
        <dbReference type="ChEBI" id="CHEBI:57287"/>
        <dbReference type="ChEBI" id="CHEBI:57292"/>
        <dbReference type="ChEBI" id="CHEBI:58189"/>
    </reaction>
    <physiologicalReaction direction="right-to-left" evidence="1">
        <dbReference type="Rhea" id="RHEA:22122"/>
    </physiologicalReaction>
</comment>
<comment type="cofactor">
    <cofactor evidence="1">
        <name>Mg(2+)</name>
        <dbReference type="ChEBI" id="CHEBI:18420"/>
    </cofactor>
    <text evidence="1">Binds 1 Mg(2+) ion per subunit.</text>
</comment>
<comment type="pathway">
    <text evidence="1">Carbohydrate metabolism; tricarboxylic acid cycle; succinate from succinyl-CoA (ligase route): step 1/1.</text>
</comment>
<comment type="subunit">
    <text evidence="1">Heterotetramer of two alpha and two beta subunits.</text>
</comment>
<comment type="similarity">
    <text evidence="1">Belongs to the succinate/malate CoA ligase beta subunit family.</text>
</comment>
<organism>
    <name type="scientific">Neisseria gonorrhoeae (strain NCCP11945)</name>
    <dbReference type="NCBI Taxonomy" id="521006"/>
    <lineage>
        <taxon>Bacteria</taxon>
        <taxon>Pseudomonadati</taxon>
        <taxon>Pseudomonadota</taxon>
        <taxon>Betaproteobacteria</taxon>
        <taxon>Neisseriales</taxon>
        <taxon>Neisseriaceae</taxon>
        <taxon>Neisseria</taxon>
    </lineage>
</organism>
<feature type="chain" id="PRO_1000129202" description="Succinate--CoA ligase [ADP-forming] subunit beta">
    <location>
        <begin position="1"/>
        <end position="388"/>
    </location>
</feature>
<feature type="domain" description="ATP-grasp" evidence="1">
    <location>
        <begin position="9"/>
        <end position="245"/>
    </location>
</feature>
<feature type="binding site" evidence="1">
    <location>
        <position position="46"/>
    </location>
    <ligand>
        <name>ATP</name>
        <dbReference type="ChEBI" id="CHEBI:30616"/>
    </ligand>
</feature>
<feature type="binding site" evidence="1">
    <location>
        <begin position="53"/>
        <end position="55"/>
    </location>
    <ligand>
        <name>ATP</name>
        <dbReference type="ChEBI" id="CHEBI:30616"/>
    </ligand>
</feature>
<feature type="binding site" evidence="1">
    <location>
        <position position="100"/>
    </location>
    <ligand>
        <name>ATP</name>
        <dbReference type="ChEBI" id="CHEBI:30616"/>
    </ligand>
</feature>
<feature type="binding site" evidence="1">
    <location>
        <position position="103"/>
    </location>
    <ligand>
        <name>ATP</name>
        <dbReference type="ChEBI" id="CHEBI:30616"/>
    </ligand>
</feature>
<feature type="binding site" evidence="1">
    <location>
        <position position="108"/>
    </location>
    <ligand>
        <name>ATP</name>
        <dbReference type="ChEBI" id="CHEBI:30616"/>
    </ligand>
</feature>
<feature type="binding site" evidence="1">
    <location>
        <position position="200"/>
    </location>
    <ligand>
        <name>Mg(2+)</name>
        <dbReference type="ChEBI" id="CHEBI:18420"/>
    </ligand>
</feature>
<feature type="binding site" evidence="1">
    <location>
        <position position="214"/>
    </location>
    <ligand>
        <name>Mg(2+)</name>
        <dbReference type="ChEBI" id="CHEBI:18420"/>
    </ligand>
</feature>
<feature type="binding site" evidence="1">
    <location>
        <position position="265"/>
    </location>
    <ligand>
        <name>substrate</name>
        <note>ligand shared with subunit alpha</note>
    </ligand>
</feature>
<feature type="binding site" evidence="1">
    <location>
        <begin position="322"/>
        <end position="324"/>
    </location>
    <ligand>
        <name>substrate</name>
        <note>ligand shared with subunit alpha</note>
    </ligand>
</feature>